<gene>
    <name type="primary">Top1mt</name>
</gene>
<feature type="transit peptide" description="Mitochondrion" evidence="1">
    <location>
        <begin position="1"/>
        <end position="43"/>
    </location>
</feature>
<feature type="chain" id="PRO_0000384395" description="DNA topoisomerase I, mitochondrial">
    <location>
        <begin position="44"/>
        <end position="593"/>
    </location>
</feature>
<feature type="domain" description="Topo IB-type catalytic" evidence="2">
    <location>
        <begin position="261"/>
        <end position="593"/>
    </location>
</feature>
<feature type="region of interest" description="Interaction with DNA" evidence="1">
    <location>
        <begin position="254"/>
        <end position="255"/>
    </location>
</feature>
<feature type="region of interest" description="Interaction with DNA" evidence="1">
    <location>
        <begin position="317"/>
        <end position="322"/>
    </location>
</feature>
<feature type="region of interest" description="Interaction with DNA" evidence="1">
    <location>
        <begin position="414"/>
        <end position="416"/>
    </location>
</feature>
<feature type="active site" description="O-(3'-phospho-DNA)-tyrosine intermediate" evidence="2">
    <location>
        <position position="551"/>
    </location>
</feature>
<feature type="site" description="Interaction with DNA" evidence="1">
    <location>
        <position position="145"/>
    </location>
</feature>
<feature type="site" description="Interaction with DNA" evidence="1">
    <location>
        <position position="193"/>
    </location>
</feature>
<feature type="site" description="Interaction with DNA" evidence="1">
    <location>
        <position position="241"/>
    </location>
</feature>
<feature type="site" description="Interaction with DNA" evidence="1">
    <location>
        <position position="272"/>
    </location>
</feature>
<feature type="site" description="Interaction with DNA" evidence="1">
    <location>
        <position position="330"/>
    </location>
</feature>
<feature type="site" description="Interaction with DNA" evidence="1">
    <location>
        <position position="361"/>
    </location>
</feature>
<feature type="site" description="Interaction with DNA" evidence="1">
    <location>
        <position position="403"/>
    </location>
</feature>
<feature type="site" description="Interaction with DNA" evidence="1">
    <location>
        <position position="461"/>
    </location>
</feature>
<feature type="site" description="Interaction with DNA" evidence="1">
    <location>
        <position position="479"/>
    </location>
</feature>
<proteinExistence type="evidence at transcript level"/>
<evidence type="ECO:0000250" key="1"/>
<evidence type="ECO:0000255" key="2">
    <source>
        <dbReference type="PROSITE-ProRule" id="PRU01382"/>
    </source>
</evidence>
<evidence type="ECO:0000305" key="3"/>
<reference key="1">
    <citation type="journal article" date="2004" name="Nucleic Acids Res.">
        <title>Thirteen-exon-motif signature for vertebrate nuclear and mitochondrial type IB topoisomerases.</title>
        <authorList>
            <person name="Zhang H."/>
            <person name="Meng L.-H."/>
            <person name="Zimonjic D.B."/>
            <person name="Popescu N.C."/>
            <person name="Pommier Y."/>
        </authorList>
    </citation>
    <scope>NUCLEOTIDE SEQUENCE [MRNA]</scope>
</reference>
<dbReference type="EC" id="5.6.2.1"/>
<dbReference type="EMBL" id="BK001786">
    <property type="protein sequence ID" value="DAA02296.1"/>
    <property type="molecule type" value="mRNA"/>
</dbReference>
<dbReference type="RefSeq" id="NP_001002798.1">
    <property type="nucleotide sequence ID" value="NM_001002798.1"/>
</dbReference>
<dbReference type="SMR" id="Q6IM78"/>
<dbReference type="FunCoup" id="Q6IM78">
    <property type="interactions" value="467"/>
</dbReference>
<dbReference type="STRING" id="10116.ENSRNOP00000009965"/>
<dbReference type="PhosphoSitePlus" id="Q6IM78"/>
<dbReference type="PaxDb" id="10116-ENSRNOP00000009965"/>
<dbReference type="Ensembl" id="ENSRNOT00000009965.5">
    <property type="protein sequence ID" value="ENSRNOP00000009965.3"/>
    <property type="gene ID" value="ENSRNOG00000007500.6"/>
</dbReference>
<dbReference type="GeneID" id="300029"/>
<dbReference type="KEGG" id="rno:300029"/>
<dbReference type="UCSC" id="RGD:1303177">
    <property type="organism name" value="rat"/>
</dbReference>
<dbReference type="AGR" id="RGD:1303177"/>
<dbReference type="CTD" id="116447"/>
<dbReference type="RGD" id="1303177">
    <property type="gene designation" value="Top1mt"/>
</dbReference>
<dbReference type="eggNOG" id="KOG0981">
    <property type="taxonomic scope" value="Eukaryota"/>
</dbReference>
<dbReference type="GeneTree" id="ENSGT00940000162943"/>
<dbReference type="InParanoid" id="Q6IM78"/>
<dbReference type="OMA" id="NWWEQEN"/>
<dbReference type="OrthoDB" id="47179at2759"/>
<dbReference type="PhylomeDB" id="Q6IM78"/>
<dbReference type="TreeFam" id="TF105281"/>
<dbReference type="PRO" id="PR:Q6IM78"/>
<dbReference type="Proteomes" id="UP000002494">
    <property type="component" value="Chromosome 7"/>
</dbReference>
<dbReference type="Bgee" id="ENSRNOG00000007500">
    <property type="expression patterns" value="Expressed in testis and 19 other cell types or tissues"/>
</dbReference>
<dbReference type="ExpressionAtlas" id="Q6IM78">
    <property type="expression patterns" value="baseline and differential"/>
</dbReference>
<dbReference type="GO" id="GO:0005694">
    <property type="term" value="C:chromosome"/>
    <property type="evidence" value="ECO:0007669"/>
    <property type="project" value="InterPro"/>
</dbReference>
<dbReference type="GO" id="GO:0042645">
    <property type="term" value="C:mitochondrial nucleoid"/>
    <property type="evidence" value="ECO:0000266"/>
    <property type="project" value="RGD"/>
</dbReference>
<dbReference type="GO" id="GO:0005654">
    <property type="term" value="C:nucleoplasm"/>
    <property type="evidence" value="ECO:0007669"/>
    <property type="project" value="Ensembl"/>
</dbReference>
<dbReference type="GO" id="GO:0003677">
    <property type="term" value="F:DNA binding"/>
    <property type="evidence" value="ECO:0007669"/>
    <property type="project" value="UniProtKB-KW"/>
</dbReference>
<dbReference type="GO" id="GO:0003917">
    <property type="term" value="F:DNA topoisomerase type I (single strand cut, ATP-independent) activity"/>
    <property type="evidence" value="ECO:0000318"/>
    <property type="project" value="GO_Central"/>
</dbReference>
<dbReference type="GO" id="GO:0006260">
    <property type="term" value="P:DNA replication"/>
    <property type="evidence" value="ECO:0000318"/>
    <property type="project" value="GO_Central"/>
</dbReference>
<dbReference type="GO" id="GO:0006265">
    <property type="term" value="P:DNA topological change"/>
    <property type="evidence" value="ECO:0000318"/>
    <property type="project" value="GO_Central"/>
</dbReference>
<dbReference type="CDD" id="cd00659">
    <property type="entry name" value="Topo_IB_C"/>
    <property type="match status" value="1"/>
</dbReference>
<dbReference type="CDD" id="cd03488">
    <property type="entry name" value="Topoisomer_IB_N_htopoI_like"/>
    <property type="match status" value="1"/>
</dbReference>
<dbReference type="FunFam" id="1.10.10.41:FF:000001">
    <property type="entry name" value="DNA topoisomerase I"/>
    <property type="match status" value="1"/>
</dbReference>
<dbReference type="FunFam" id="1.10.132.10:FF:000001">
    <property type="entry name" value="DNA topoisomerase I"/>
    <property type="match status" value="1"/>
</dbReference>
<dbReference type="FunFam" id="2.170.11.10:FF:000002">
    <property type="entry name" value="DNA topoisomerase I"/>
    <property type="match status" value="1"/>
</dbReference>
<dbReference type="FunFam" id="3.90.15.10:FF:000001">
    <property type="entry name" value="DNA topoisomerase I"/>
    <property type="match status" value="1"/>
</dbReference>
<dbReference type="Gene3D" id="1.10.132.10">
    <property type="match status" value="1"/>
</dbReference>
<dbReference type="Gene3D" id="2.170.11.10">
    <property type="entry name" value="DNA Topoisomerase I, domain 2"/>
    <property type="match status" value="1"/>
</dbReference>
<dbReference type="Gene3D" id="3.90.15.10">
    <property type="entry name" value="Topoisomerase I, Chain A, domain 3"/>
    <property type="match status" value="1"/>
</dbReference>
<dbReference type="Gene3D" id="1.10.10.41">
    <property type="entry name" value="Yeast DNA topoisomerase - domain 1"/>
    <property type="match status" value="1"/>
</dbReference>
<dbReference type="InterPro" id="IPR011010">
    <property type="entry name" value="DNA_brk_join_enz"/>
</dbReference>
<dbReference type="InterPro" id="IPR013034">
    <property type="entry name" value="DNA_topo_DNA_db_N_dom1"/>
</dbReference>
<dbReference type="InterPro" id="IPR013030">
    <property type="entry name" value="DNA_topo_DNA_db_N_dom2"/>
</dbReference>
<dbReference type="InterPro" id="IPR001631">
    <property type="entry name" value="TopoI"/>
</dbReference>
<dbReference type="InterPro" id="IPR025834">
    <property type="entry name" value="TopoI_C_dom"/>
</dbReference>
<dbReference type="InterPro" id="IPR014711">
    <property type="entry name" value="TopoI_cat_a-hlx-sub_euk"/>
</dbReference>
<dbReference type="InterPro" id="IPR014727">
    <property type="entry name" value="TopoI_cat_a/b-sub_euk"/>
</dbReference>
<dbReference type="InterPro" id="IPR013500">
    <property type="entry name" value="TopoI_cat_euk"/>
</dbReference>
<dbReference type="InterPro" id="IPR008336">
    <property type="entry name" value="TopoI_DNA-bd_euk"/>
</dbReference>
<dbReference type="InterPro" id="IPR036202">
    <property type="entry name" value="TopoI_DNA-bd_euk_N_sf"/>
</dbReference>
<dbReference type="InterPro" id="IPR013499">
    <property type="entry name" value="TopoI_euk"/>
</dbReference>
<dbReference type="InterPro" id="IPR048045">
    <property type="entry name" value="Topoisomer_I_DNA-bd"/>
</dbReference>
<dbReference type="InterPro" id="IPR051062">
    <property type="entry name" value="Topoisomerase_IB"/>
</dbReference>
<dbReference type="PANTHER" id="PTHR10290">
    <property type="entry name" value="DNA TOPOISOMERASE I"/>
    <property type="match status" value="1"/>
</dbReference>
<dbReference type="PANTHER" id="PTHR10290:SF1">
    <property type="entry name" value="DNA TOPOISOMERASE I, MITOCHONDRIAL"/>
    <property type="match status" value="1"/>
</dbReference>
<dbReference type="Pfam" id="PF14370">
    <property type="entry name" value="Topo_C_assoc"/>
    <property type="match status" value="1"/>
</dbReference>
<dbReference type="Pfam" id="PF01028">
    <property type="entry name" value="Topoisom_I"/>
    <property type="match status" value="1"/>
</dbReference>
<dbReference type="Pfam" id="PF02919">
    <property type="entry name" value="Topoisom_I_N"/>
    <property type="match status" value="1"/>
</dbReference>
<dbReference type="PRINTS" id="PR00416">
    <property type="entry name" value="EUTPISMRASEI"/>
</dbReference>
<dbReference type="SMART" id="SM00435">
    <property type="entry name" value="TOPEUc"/>
    <property type="match status" value="1"/>
</dbReference>
<dbReference type="SUPFAM" id="SSF56349">
    <property type="entry name" value="DNA breaking-rejoining enzymes"/>
    <property type="match status" value="1"/>
</dbReference>
<dbReference type="SUPFAM" id="SSF46596">
    <property type="entry name" value="Eukaryotic DNA topoisomerase I, dispensable insert domain"/>
    <property type="match status" value="1"/>
</dbReference>
<dbReference type="SUPFAM" id="SSF56741">
    <property type="entry name" value="Eukaryotic DNA topoisomerase I, N-terminal DNA-binding fragment"/>
    <property type="match status" value="1"/>
</dbReference>
<dbReference type="PROSITE" id="PS52038">
    <property type="entry name" value="TOPO_IB_2"/>
    <property type="match status" value="1"/>
</dbReference>
<comment type="function">
    <text evidence="1">Releases the supercoiling and torsional tension of DNA introduced during duplication of mitochondrial DNA by transiently cleaving and rejoining one strand of the DNA duplex. Introduces a single-strand break via transesterification at a target site in duplex DNA. The scissile phosphodiester is attacked by the catalytic tyrosine of the enzyme, resulting in the formation of a DNA-(3'-phosphotyrosyl)-enzyme intermediate and the expulsion of a 5'-OH DNA strand. The free DNA strand then rotates around the intact phosphodiester bond on the opposing strand, thus removing DNA supercoils. Finally, in the religation step, the DNA 5'-OH attacks the covalent intermediate to expel the active-site tyrosine and restore the DNA phosphodiester backbone (By similarity).</text>
</comment>
<comment type="catalytic activity">
    <reaction>
        <text>ATP-independent breakage of single-stranded DNA, followed by passage and rejoining.</text>
        <dbReference type="EC" id="5.6.2.1"/>
    </reaction>
</comment>
<comment type="cofactor">
    <cofactor evidence="1">
        <name>Ca(2+)</name>
        <dbReference type="ChEBI" id="CHEBI:29108"/>
    </cofactor>
    <cofactor evidence="1">
        <name>Mg(2+)</name>
        <dbReference type="ChEBI" id="CHEBI:18420"/>
    </cofactor>
    <text evidence="1">Divalent metal ions (calcium or magnesium).</text>
</comment>
<comment type="subcellular location">
    <subcellularLocation>
        <location evidence="1">Mitochondrion</location>
    </subcellularLocation>
</comment>
<comment type="similarity">
    <text evidence="3">Belongs to the type IB topoisomerase family.</text>
</comment>
<accession>Q6IM78</accession>
<keyword id="KW-0238">DNA-binding</keyword>
<keyword id="KW-0413">Isomerase</keyword>
<keyword id="KW-0496">Mitochondrion</keyword>
<keyword id="KW-1185">Reference proteome</keyword>
<keyword id="KW-0799">Topoisomerase</keyword>
<keyword id="KW-0809">Transit peptide</keyword>
<protein>
    <recommendedName>
        <fullName>DNA topoisomerase I, mitochondrial</fullName>
        <shortName>TOP1mt</shortName>
        <ecNumber>5.6.2.1</ecNumber>
    </recommendedName>
</protein>
<sequence length="593" mass="69011">MLLLWLRALCRRFQHVPRRVPSRQVSRGSKASRAGWGETSKSSVKWKQLEHKGPCFAPAYEPLPDGVRFFYDGKPVRLSLAAEEVATFYGKMLHLECTTKEVFRRNFFSDWQKEMTAEERKLITHLDKCDFSEIHRHFMERAEARRTLPREQKQKLKEEAEKLQQEFGYCILDGHREKIGNFKTEPPGLFRGRGDHPKMGMLKRRVMPEDVVINCSRDSKIPEPPAGHQWKEVRSDNTVMWLAAWVENIQNSFKYIILNPSSKPKGEMDWQKYEVARRLKGVVDKIRAQYQADWKSPEMKKRQLAVALYFIDKLALRTGNEKEEGETADTVGCCSLRVEHVRLHTPADGQEHVVELDFLGKDSIRYKNHVTVEKLVFQNLQHFMEDKDPRDDLFDALTTSSLNKHLQDLMEGLTAKVFRTYNASITLQEQLRVLTRAEDSLTCKVLAYNRANRAVAVLCNHQRAIPKTFEESMQTLQKKIETKKAQVAEAQVELQKAETDLRMRGDSKSKSFLQKQQRLLKLEEQLARLCTKATDKEENKQVALGTAKLNYLDPRISIAWCKRFGVPVEKIYNKTQRERFAWAFNQAGEDFEF</sequence>
<organism>
    <name type="scientific">Rattus norvegicus</name>
    <name type="common">Rat</name>
    <dbReference type="NCBI Taxonomy" id="10116"/>
    <lineage>
        <taxon>Eukaryota</taxon>
        <taxon>Metazoa</taxon>
        <taxon>Chordata</taxon>
        <taxon>Craniata</taxon>
        <taxon>Vertebrata</taxon>
        <taxon>Euteleostomi</taxon>
        <taxon>Mammalia</taxon>
        <taxon>Eutheria</taxon>
        <taxon>Euarchontoglires</taxon>
        <taxon>Glires</taxon>
        <taxon>Rodentia</taxon>
        <taxon>Myomorpha</taxon>
        <taxon>Muroidea</taxon>
        <taxon>Muridae</taxon>
        <taxon>Murinae</taxon>
        <taxon>Rattus</taxon>
    </lineage>
</organism>
<name>TOP1M_RAT</name>